<feature type="chain" id="PRO_0000223316" description="Coiled-coil domain-containing protein 178">
    <location>
        <begin position="1"/>
        <end position="867"/>
    </location>
</feature>
<feature type="coiled-coil region" evidence="1">
    <location>
        <begin position="153"/>
        <end position="204"/>
    </location>
</feature>
<feature type="coiled-coil region" evidence="1">
    <location>
        <begin position="233"/>
        <end position="414"/>
    </location>
</feature>
<feature type="coiled-coil region" evidence="1">
    <location>
        <begin position="445"/>
        <end position="470"/>
    </location>
</feature>
<feature type="coiled-coil region" evidence="1">
    <location>
        <begin position="662"/>
        <end position="696"/>
    </location>
</feature>
<feature type="splice variant" id="VSP_017257" description="In isoform 2." evidence="3">
    <location>
        <begin position="607"/>
        <end position="644"/>
    </location>
</feature>
<feature type="splice variant" id="VSP_017258" description="In isoform 3." evidence="3">
    <location>
        <begin position="747"/>
        <end position="796"/>
    </location>
</feature>
<feature type="splice variant" id="VSP_053415" description="In isoform 4." evidence="4">
    <original>EESSNLMQHILGFFQTLTDGTCENDG</original>
    <variation>NQYDLEKE</variation>
    <location>
        <begin position="842"/>
        <end position="867"/>
    </location>
</feature>
<feature type="sequence variant" id="VAR_047010" description="In dbSNP:rs12606658.">
    <original>A</original>
    <variation>T</variation>
    <location>
        <position position="42"/>
    </location>
</feature>
<feature type="sequence variant" id="VAR_061624" description="In dbSNP:rs58448816.">
    <original>D</original>
    <variation>N</variation>
    <location>
        <position position="420"/>
    </location>
</feature>
<feature type="sequence variant" id="VAR_047011" description="In dbSNP:rs9965081." evidence="2">
    <original>V</original>
    <variation>E</variation>
    <location>
        <position position="465"/>
    </location>
</feature>
<feature type="sequence variant" id="VAR_047012" description="In dbSNP:rs457896.">
    <original>L</original>
    <variation>R</variation>
    <location>
        <position position="600"/>
    </location>
</feature>
<feature type="sequence variant" id="VAR_047013" description="In dbSNP:rs466113." evidence="2">
    <original>D</original>
    <variation>N</variation>
    <location>
        <position position="601"/>
    </location>
</feature>
<feature type="sequence conflict" description="In Ref. 1; BAC86407." evidence="5" ref="1">
    <original>L</original>
    <variation>I</variation>
    <location>
        <position position="49"/>
    </location>
</feature>
<feature type="sequence conflict" description="In Ref. 1; BAC86407." evidence="5" ref="1">
    <original>K</original>
    <variation>E</variation>
    <location>
        <position position="368"/>
    </location>
</feature>
<feature type="sequence conflict" description="In Ref. 1; BAC86407." evidence="5" ref="1">
    <original>I</original>
    <variation>F</variation>
    <location>
        <position position="768"/>
    </location>
</feature>
<keyword id="KW-0025">Alternative splicing</keyword>
<keyword id="KW-0175">Coiled coil</keyword>
<keyword id="KW-1267">Proteomics identification</keyword>
<keyword id="KW-1185">Reference proteome</keyword>
<organism>
    <name type="scientific">Homo sapiens</name>
    <name type="common">Human</name>
    <dbReference type="NCBI Taxonomy" id="9606"/>
    <lineage>
        <taxon>Eukaryota</taxon>
        <taxon>Metazoa</taxon>
        <taxon>Chordata</taxon>
        <taxon>Craniata</taxon>
        <taxon>Vertebrata</taxon>
        <taxon>Euteleostomi</taxon>
        <taxon>Mammalia</taxon>
        <taxon>Eutheria</taxon>
        <taxon>Euarchontoglires</taxon>
        <taxon>Primates</taxon>
        <taxon>Haplorrhini</taxon>
        <taxon>Catarrhini</taxon>
        <taxon>Hominidae</taxon>
        <taxon>Homo</taxon>
    </lineage>
</organism>
<evidence type="ECO:0000255" key="1"/>
<evidence type="ECO:0000269" key="2">
    <source>
    </source>
</evidence>
<evidence type="ECO:0000303" key="3">
    <source>
    </source>
</evidence>
<evidence type="ECO:0000303" key="4">
    <source>
    </source>
</evidence>
<evidence type="ECO:0000305" key="5"/>
<proteinExistence type="evidence at protein level"/>
<name>CC178_HUMAN</name>
<sequence length="867" mass="102011">MTENKTVSSSSTRDDQTNIGLTCQEVKALREKAWSRTNEGNAMSQSLVLYGASKENSEGFHESKMTNTEGVNKGIYFSYPCRRHSCAVVNIPAPCVNKMISHIQDVESKIQEHLKRFETSFEEWSRTSSTKDLKEDWSVTTPVKEVKPGEKRDEKCPELKQEMETLLSEAIRLIKSLETDRADAEEALKQQRSRKNMINMKIDSWSVWKLQELPLAVQKEHEAYLSDVIELQWHLEDKANQLQHFEKQKTELEEANAKIQADIDYMNEHGPLLDSKQNQELQDLKNHYKKKMEVMDLHRKVNEELEEALEACENARLKAQQIKEEIDKDIYQDEKTIEAYKREIYQLNSLFDHYSSSVINVNTNIEEKEEEVTEAIRETKSSKNELHSLSKMLEDLRRVYDQLTWKQKSHENQYLEAVNDFYAAKKTWDIELSDVAKDFSAISLACTKLTEDNKKLEIDINKITVKTNESIRKKSKYESEIKYLTIMKLKNDKHLKNIYKEAYRIGTLFHLTKHKTDEMEDKIAEVRRKFKGREEFLKKLTQGEVAAGMVLQKKLYSIYEVQALERKELIKNRAICAMSLAELQEPLLQLEDEAERIRSLDKEHSVMLNNIIDQKDLIRRKVGKVKKKLRKKGKKTLDALIETESKRSAIFKDLEATKSKTMIFYAKINELNEELKAKEEEKKSFDQTLEILKNKFITMRFKREHAQTVFDHYMQEKKDCEERIFEEDQRFRVLLAVRQKTLQDTQKIIADSLEENLRLAQEYQQLQITFLKEKDNYFNIYDKQLSLDTSIRDKKQLCQLQRRMHTLWQEHFKLVVLFSQMRLANFQTDSQESIQKILAVQEESSNLMQHILGFFQTLTDGTCENDG</sequence>
<reference key="1">
    <citation type="journal article" date="2004" name="Nat. Genet.">
        <title>Complete sequencing and characterization of 21,243 full-length human cDNAs.</title>
        <authorList>
            <person name="Ota T."/>
            <person name="Suzuki Y."/>
            <person name="Nishikawa T."/>
            <person name="Otsuki T."/>
            <person name="Sugiyama T."/>
            <person name="Irie R."/>
            <person name="Wakamatsu A."/>
            <person name="Hayashi K."/>
            <person name="Sato H."/>
            <person name="Nagai K."/>
            <person name="Kimura K."/>
            <person name="Makita H."/>
            <person name="Sekine M."/>
            <person name="Obayashi M."/>
            <person name="Nishi T."/>
            <person name="Shibahara T."/>
            <person name="Tanaka T."/>
            <person name="Ishii S."/>
            <person name="Yamamoto J."/>
            <person name="Saito K."/>
            <person name="Kawai Y."/>
            <person name="Isono Y."/>
            <person name="Nakamura Y."/>
            <person name="Nagahari K."/>
            <person name="Murakami K."/>
            <person name="Yasuda T."/>
            <person name="Iwayanagi T."/>
            <person name="Wagatsuma M."/>
            <person name="Shiratori A."/>
            <person name="Sudo H."/>
            <person name="Hosoiri T."/>
            <person name="Kaku Y."/>
            <person name="Kodaira H."/>
            <person name="Kondo H."/>
            <person name="Sugawara M."/>
            <person name="Takahashi M."/>
            <person name="Kanda K."/>
            <person name="Yokoi T."/>
            <person name="Furuya T."/>
            <person name="Kikkawa E."/>
            <person name="Omura Y."/>
            <person name="Abe K."/>
            <person name="Kamihara K."/>
            <person name="Katsuta N."/>
            <person name="Sato K."/>
            <person name="Tanikawa M."/>
            <person name="Yamazaki M."/>
            <person name="Ninomiya K."/>
            <person name="Ishibashi T."/>
            <person name="Yamashita H."/>
            <person name="Murakawa K."/>
            <person name="Fujimori K."/>
            <person name="Tanai H."/>
            <person name="Kimata M."/>
            <person name="Watanabe M."/>
            <person name="Hiraoka S."/>
            <person name="Chiba Y."/>
            <person name="Ishida S."/>
            <person name="Ono Y."/>
            <person name="Takiguchi S."/>
            <person name="Watanabe S."/>
            <person name="Yosida M."/>
            <person name="Hotuta T."/>
            <person name="Kusano J."/>
            <person name="Kanehori K."/>
            <person name="Takahashi-Fujii A."/>
            <person name="Hara H."/>
            <person name="Tanase T.-O."/>
            <person name="Nomura Y."/>
            <person name="Togiya S."/>
            <person name="Komai F."/>
            <person name="Hara R."/>
            <person name="Takeuchi K."/>
            <person name="Arita M."/>
            <person name="Imose N."/>
            <person name="Musashino K."/>
            <person name="Yuuki H."/>
            <person name="Oshima A."/>
            <person name="Sasaki N."/>
            <person name="Aotsuka S."/>
            <person name="Yoshikawa Y."/>
            <person name="Matsunawa H."/>
            <person name="Ichihara T."/>
            <person name="Shiohata N."/>
            <person name="Sano S."/>
            <person name="Moriya S."/>
            <person name="Momiyama H."/>
            <person name="Satoh N."/>
            <person name="Takami S."/>
            <person name="Terashima Y."/>
            <person name="Suzuki O."/>
            <person name="Nakagawa S."/>
            <person name="Senoh A."/>
            <person name="Mizoguchi H."/>
            <person name="Goto Y."/>
            <person name="Shimizu F."/>
            <person name="Wakebe H."/>
            <person name="Hishigaki H."/>
            <person name="Watanabe T."/>
            <person name="Sugiyama A."/>
            <person name="Takemoto M."/>
            <person name="Kawakami B."/>
            <person name="Yamazaki M."/>
            <person name="Watanabe K."/>
            <person name="Kumagai A."/>
            <person name="Itakura S."/>
            <person name="Fukuzumi Y."/>
            <person name="Fujimori Y."/>
            <person name="Komiyama M."/>
            <person name="Tashiro H."/>
            <person name="Tanigami A."/>
            <person name="Fujiwara T."/>
            <person name="Ono T."/>
            <person name="Yamada K."/>
            <person name="Fujii Y."/>
            <person name="Ozaki K."/>
            <person name="Hirao M."/>
            <person name="Ohmori Y."/>
            <person name="Kawabata A."/>
            <person name="Hikiji T."/>
            <person name="Kobatake N."/>
            <person name="Inagaki H."/>
            <person name="Ikema Y."/>
            <person name="Okamoto S."/>
            <person name="Okitani R."/>
            <person name="Kawakami T."/>
            <person name="Noguchi S."/>
            <person name="Itoh T."/>
            <person name="Shigeta K."/>
            <person name="Senba T."/>
            <person name="Matsumura K."/>
            <person name="Nakajima Y."/>
            <person name="Mizuno T."/>
            <person name="Morinaga M."/>
            <person name="Sasaki M."/>
            <person name="Togashi T."/>
            <person name="Oyama M."/>
            <person name="Hata H."/>
            <person name="Watanabe M."/>
            <person name="Komatsu T."/>
            <person name="Mizushima-Sugano J."/>
            <person name="Satoh T."/>
            <person name="Shirai Y."/>
            <person name="Takahashi Y."/>
            <person name="Nakagawa K."/>
            <person name="Okumura K."/>
            <person name="Nagase T."/>
            <person name="Nomura N."/>
            <person name="Kikuchi H."/>
            <person name="Masuho Y."/>
            <person name="Yamashita R."/>
            <person name="Nakai K."/>
            <person name="Yada T."/>
            <person name="Nakamura Y."/>
            <person name="Ohara O."/>
            <person name="Isogai T."/>
            <person name="Sugano S."/>
        </authorList>
    </citation>
    <scope>NUCLEOTIDE SEQUENCE [LARGE SCALE MRNA] (ISOFORM 2)</scope>
    <scope>NUCLEOTIDE SEQUENCE [LARGE SCALE MRNA] OF 454-867 (ISOFORM 3)</scope>
    <scope>VARIANTS GLU-465 AND ASN-601</scope>
    <source>
        <tissue>Kidney</tissue>
        <tissue>Testis</tissue>
    </source>
</reference>
<reference key="2">
    <citation type="journal article" date="2005" name="Nature">
        <title>DNA sequence and analysis of human chromosome 18.</title>
        <authorList>
            <person name="Nusbaum C."/>
            <person name="Zody M.C."/>
            <person name="Borowsky M.L."/>
            <person name="Kamal M."/>
            <person name="Kodira C.D."/>
            <person name="Taylor T.D."/>
            <person name="Whittaker C.A."/>
            <person name="Chang J.L."/>
            <person name="Cuomo C.A."/>
            <person name="Dewar K."/>
            <person name="FitzGerald M.G."/>
            <person name="Yang X."/>
            <person name="Abouelleil A."/>
            <person name="Allen N.R."/>
            <person name="Anderson S."/>
            <person name="Bloom T."/>
            <person name="Bugalter B."/>
            <person name="Butler J."/>
            <person name="Cook A."/>
            <person name="DeCaprio D."/>
            <person name="Engels R."/>
            <person name="Garber M."/>
            <person name="Gnirke A."/>
            <person name="Hafez N."/>
            <person name="Hall J.L."/>
            <person name="Norman C.H."/>
            <person name="Itoh T."/>
            <person name="Jaffe D.B."/>
            <person name="Kuroki Y."/>
            <person name="Lehoczky J."/>
            <person name="Lui A."/>
            <person name="Macdonald P."/>
            <person name="Mauceli E."/>
            <person name="Mikkelsen T.S."/>
            <person name="Naylor J.W."/>
            <person name="Nicol R."/>
            <person name="Nguyen C."/>
            <person name="Noguchi H."/>
            <person name="O'Leary S.B."/>
            <person name="Piqani B."/>
            <person name="Smith C.L."/>
            <person name="Talamas J.A."/>
            <person name="Topham K."/>
            <person name="Totoki Y."/>
            <person name="Toyoda A."/>
            <person name="Wain H.M."/>
            <person name="Young S.K."/>
            <person name="Zeng Q."/>
            <person name="Zimmer A.R."/>
            <person name="Fujiyama A."/>
            <person name="Hattori M."/>
            <person name="Birren B.W."/>
            <person name="Sakaki Y."/>
            <person name="Lander E.S."/>
        </authorList>
    </citation>
    <scope>NUCLEOTIDE SEQUENCE [LARGE SCALE GENOMIC DNA]</scope>
</reference>
<reference key="3">
    <citation type="journal article" date="2004" name="Genome Res.">
        <title>The status, quality, and expansion of the NIH full-length cDNA project: the Mammalian Gene Collection (MGC).</title>
        <authorList>
            <consortium name="The MGC Project Team"/>
        </authorList>
    </citation>
    <scope>NUCLEOTIDE SEQUENCE [LARGE SCALE MRNA] (ISOFORM 4)</scope>
    <source>
        <tissue>Testis</tissue>
    </source>
</reference>
<accession>Q5BJE1</accession>
<accession>A6NDC6</accession>
<accession>J3KS92</accession>
<accession>Q6ZP67</accession>
<accession>Q6ZU20</accession>
<gene>
    <name type="primary">CCDC178</name>
    <name type="synonym">C18orf34</name>
</gene>
<protein>
    <recommendedName>
        <fullName>Coiled-coil domain-containing protein 178</fullName>
    </recommendedName>
</protein>
<comment type="alternative products">
    <event type="alternative splicing"/>
    <isoform>
        <id>Q5BJE1-1</id>
        <name>1</name>
        <sequence type="displayed"/>
    </isoform>
    <isoform>
        <id>Q5BJE1-2</id>
        <name>2</name>
        <sequence type="described" ref="VSP_017257"/>
    </isoform>
    <isoform>
        <id>Q5BJE1-3</id>
        <name>3</name>
        <sequence type="described" ref="VSP_017258"/>
    </isoform>
    <isoform>
        <id>Q5BJE1-4</id>
        <name>4</name>
        <sequence type="described" ref="VSP_053415"/>
    </isoform>
</comment>
<comment type="sequence caution" evidence="5">
    <conflict type="erroneous initiation">
        <sequence resource="EMBL-CDS" id="BAC85257"/>
    </conflict>
</comment>
<dbReference type="EMBL" id="AK126038">
    <property type="protein sequence ID" value="BAC86407.1"/>
    <property type="molecule type" value="mRNA"/>
</dbReference>
<dbReference type="EMBL" id="AK129955">
    <property type="protein sequence ID" value="BAC85257.1"/>
    <property type="status" value="ALT_INIT"/>
    <property type="molecule type" value="mRNA"/>
</dbReference>
<dbReference type="EMBL" id="AC025888">
    <property type="status" value="NOT_ANNOTATED_CDS"/>
    <property type="molecule type" value="Genomic_DNA"/>
</dbReference>
<dbReference type="EMBL" id="AC090371">
    <property type="status" value="NOT_ANNOTATED_CDS"/>
    <property type="molecule type" value="Genomic_DNA"/>
</dbReference>
<dbReference type="EMBL" id="AC100845">
    <property type="status" value="NOT_ANNOTATED_CDS"/>
    <property type="molecule type" value="Genomic_DNA"/>
</dbReference>
<dbReference type="EMBL" id="AC104956">
    <property type="status" value="NOT_ANNOTATED_CDS"/>
    <property type="molecule type" value="Genomic_DNA"/>
</dbReference>
<dbReference type="EMBL" id="AC116607">
    <property type="status" value="NOT_ANNOTATED_CDS"/>
    <property type="molecule type" value="Genomic_DNA"/>
</dbReference>
<dbReference type="EMBL" id="BC091517">
    <property type="protein sequence ID" value="AAH91517.1"/>
    <property type="molecule type" value="mRNA"/>
</dbReference>
<dbReference type="CCDS" id="CCDS11906.1">
    <molecule id="Q5BJE1-2"/>
</dbReference>
<dbReference type="CCDS" id="CCDS42424.1">
    <molecule id="Q5BJE1-1"/>
</dbReference>
<dbReference type="RefSeq" id="NP_001098998.1">
    <molecule id="Q5BJE1-1"/>
    <property type="nucleotide sequence ID" value="NM_001105528.4"/>
</dbReference>
<dbReference type="RefSeq" id="NP_001295055.1">
    <property type="nucleotide sequence ID" value="NM_001308126.1"/>
</dbReference>
<dbReference type="RefSeq" id="NP_945346.2">
    <molecule id="Q5BJE1-2"/>
    <property type="nucleotide sequence ID" value="NM_198995.3"/>
</dbReference>
<dbReference type="RefSeq" id="XP_011524250.1">
    <property type="nucleotide sequence ID" value="XM_011525948.1"/>
</dbReference>
<dbReference type="RefSeq" id="XP_011524253.1">
    <molecule id="Q5BJE1-3"/>
    <property type="nucleotide sequence ID" value="XM_011525951.2"/>
</dbReference>
<dbReference type="SMR" id="Q5BJE1"/>
<dbReference type="BioGRID" id="131924">
    <property type="interactions" value="3"/>
</dbReference>
<dbReference type="FunCoup" id="Q5BJE1">
    <property type="interactions" value="22"/>
</dbReference>
<dbReference type="IntAct" id="Q5BJE1">
    <property type="interactions" value="1"/>
</dbReference>
<dbReference type="STRING" id="9606.ENSP00000463254"/>
<dbReference type="GlyGen" id="Q5BJE1">
    <property type="glycosylation" value="1 site, 1 O-linked glycan (1 site)"/>
</dbReference>
<dbReference type="iPTMnet" id="Q5BJE1"/>
<dbReference type="PhosphoSitePlus" id="Q5BJE1"/>
<dbReference type="BioMuta" id="CCDC178"/>
<dbReference type="DMDM" id="209572750"/>
<dbReference type="jPOST" id="Q5BJE1"/>
<dbReference type="MassIVE" id="Q5BJE1"/>
<dbReference type="PaxDb" id="9606-ENSP00000372576"/>
<dbReference type="PeptideAtlas" id="Q5BJE1"/>
<dbReference type="ProteomicsDB" id="62676">
    <molecule id="Q5BJE1-1"/>
</dbReference>
<dbReference type="ProteomicsDB" id="62677">
    <molecule id="Q5BJE1-2"/>
</dbReference>
<dbReference type="ProteomicsDB" id="62678">
    <molecule id="Q5BJE1-3"/>
</dbReference>
<dbReference type="Pumba" id="Q5BJE1"/>
<dbReference type="Antibodypedia" id="48809">
    <property type="antibodies" value="18 antibodies from 11 providers"/>
</dbReference>
<dbReference type="DNASU" id="374864"/>
<dbReference type="Ensembl" id="ENST00000300227.12">
    <molecule id="Q5BJE1-2"/>
    <property type="protein sequence ID" value="ENSP00000300227.8"/>
    <property type="gene ID" value="ENSG00000166960.17"/>
</dbReference>
<dbReference type="Ensembl" id="ENST00000383096.8">
    <molecule id="Q5BJE1-1"/>
    <property type="protein sequence ID" value="ENSP00000372576.3"/>
    <property type="gene ID" value="ENSG00000166960.17"/>
</dbReference>
<dbReference type="Ensembl" id="ENST00000403303.5">
    <molecule id="Q5BJE1-1"/>
    <property type="protein sequence ID" value="ENSP00000385591.1"/>
    <property type="gene ID" value="ENSG00000166960.17"/>
</dbReference>
<dbReference type="Ensembl" id="ENST00000579947.5">
    <molecule id="Q5BJE1-4"/>
    <property type="protein sequence ID" value="ENSP00000462370.1"/>
    <property type="gene ID" value="ENSG00000166960.17"/>
</dbReference>
<dbReference type="GeneID" id="374864"/>
<dbReference type="KEGG" id="hsa:374864"/>
<dbReference type="MANE-Select" id="ENST00000383096.8">
    <property type="protein sequence ID" value="ENSP00000372576.3"/>
    <property type="RefSeq nucleotide sequence ID" value="NM_001105528.4"/>
    <property type="RefSeq protein sequence ID" value="NP_001098998.1"/>
</dbReference>
<dbReference type="UCSC" id="uc002kxn.3">
    <molecule id="Q5BJE1-1"/>
    <property type="organism name" value="human"/>
</dbReference>
<dbReference type="AGR" id="HGNC:29588"/>
<dbReference type="CTD" id="374864"/>
<dbReference type="DisGeNET" id="374864"/>
<dbReference type="GeneCards" id="CCDC178"/>
<dbReference type="HGNC" id="HGNC:29588">
    <property type="gene designation" value="CCDC178"/>
</dbReference>
<dbReference type="HPA" id="ENSG00000166960">
    <property type="expression patterns" value="Tissue enhanced (adipose tissue, ovary, testis)"/>
</dbReference>
<dbReference type="neXtProt" id="NX_Q5BJE1"/>
<dbReference type="OpenTargets" id="ENSG00000166960"/>
<dbReference type="PharmGKB" id="PA134979792"/>
<dbReference type="VEuPathDB" id="HostDB:ENSG00000166960"/>
<dbReference type="eggNOG" id="ENOG502R7DC">
    <property type="taxonomic scope" value="Eukaryota"/>
</dbReference>
<dbReference type="GeneTree" id="ENSGT00390000012215"/>
<dbReference type="HOGENOM" id="CLU_012461_0_0_1"/>
<dbReference type="InParanoid" id="Q5BJE1"/>
<dbReference type="OrthoDB" id="10010556at2759"/>
<dbReference type="PAN-GO" id="Q5BJE1">
    <property type="GO annotations" value="0 GO annotations based on evolutionary models"/>
</dbReference>
<dbReference type="PhylomeDB" id="Q5BJE1"/>
<dbReference type="TreeFam" id="TF337479"/>
<dbReference type="PathwayCommons" id="Q5BJE1"/>
<dbReference type="SignaLink" id="Q5BJE1"/>
<dbReference type="BioGRID-ORCS" id="374864">
    <property type="hits" value="14 hits in 1157 CRISPR screens"/>
</dbReference>
<dbReference type="ChiTaRS" id="CCDC178">
    <property type="organism name" value="human"/>
</dbReference>
<dbReference type="GenomeRNAi" id="374864"/>
<dbReference type="Pharos" id="Q5BJE1">
    <property type="development level" value="Tdark"/>
</dbReference>
<dbReference type="PRO" id="PR:Q5BJE1"/>
<dbReference type="Proteomes" id="UP000005640">
    <property type="component" value="Chromosome 18"/>
</dbReference>
<dbReference type="RNAct" id="Q5BJE1">
    <property type="molecule type" value="protein"/>
</dbReference>
<dbReference type="Bgee" id="ENSG00000166960">
    <property type="expression patterns" value="Expressed in sperm and 96 other cell types or tissues"/>
</dbReference>
<dbReference type="ExpressionAtlas" id="Q5BJE1">
    <property type="expression patterns" value="baseline and differential"/>
</dbReference>
<dbReference type="GO" id="GO:0036064">
    <property type="term" value="C:ciliary basal body"/>
    <property type="evidence" value="ECO:0000314"/>
    <property type="project" value="GO_Central"/>
</dbReference>
<dbReference type="InterPro" id="IPR038826">
    <property type="entry name" value="CCDC178"/>
</dbReference>
<dbReference type="PANTHER" id="PTHR35088">
    <property type="entry name" value="COILED-COIL DOMAIN-CONTAINING PROTEIN 178"/>
    <property type="match status" value="1"/>
</dbReference>
<dbReference type="PANTHER" id="PTHR35088:SF1">
    <property type="entry name" value="COILED-COIL DOMAIN-CONTAINING PROTEIN 178"/>
    <property type="match status" value="1"/>
</dbReference>